<accession>P0A498</accession>
<accession>P78001</accession>
<accession>Q9JPZ9</accession>
<feature type="chain" id="PRO_0000126294" description="Large ribosomal subunit protein bL36">
    <location>
        <begin position="1"/>
        <end position="37"/>
    </location>
</feature>
<evidence type="ECO:0000305" key="1"/>
<keyword id="KW-0687">Ribonucleoprotein</keyword>
<keyword id="KW-0689">Ribosomal protein</keyword>
<protein>
    <recommendedName>
        <fullName evidence="1">Large ribosomal subunit protein bL36</fullName>
    </recommendedName>
    <alternativeName>
        <fullName>50S ribosomal protein L36</fullName>
    </alternativeName>
</protein>
<name>RL36_VIBPA</name>
<proteinExistence type="inferred from homology"/>
<dbReference type="EMBL" id="BA000031">
    <property type="protein sequence ID" value="BAC58541.1"/>
    <property type="molecule type" value="Genomic_DNA"/>
</dbReference>
<dbReference type="RefSeq" id="NP_796657.1">
    <property type="nucleotide sequence ID" value="NC_004603.1"/>
</dbReference>
<dbReference type="RefSeq" id="WP_000868186.1">
    <property type="nucleotide sequence ID" value="NC_004603.1"/>
</dbReference>
<dbReference type="SMR" id="P0A498"/>
<dbReference type="GeneID" id="97171202"/>
<dbReference type="KEGG" id="vpa:VP0278"/>
<dbReference type="PATRIC" id="fig|223926.6.peg.269"/>
<dbReference type="eggNOG" id="COG0257">
    <property type="taxonomic scope" value="Bacteria"/>
</dbReference>
<dbReference type="HOGENOM" id="CLU_135723_6_2_6"/>
<dbReference type="PRO" id="PR:P0A498"/>
<dbReference type="Proteomes" id="UP000002493">
    <property type="component" value="Chromosome 1"/>
</dbReference>
<dbReference type="GO" id="GO:0005737">
    <property type="term" value="C:cytoplasm"/>
    <property type="evidence" value="ECO:0007669"/>
    <property type="project" value="UniProtKB-ARBA"/>
</dbReference>
<dbReference type="GO" id="GO:1990904">
    <property type="term" value="C:ribonucleoprotein complex"/>
    <property type="evidence" value="ECO:0007669"/>
    <property type="project" value="UniProtKB-KW"/>
</dbReference>
<dbReference type="GO" id="GO:0005840">
    <property type="term" value="C:ribosome"/>
    <property type="evidence" value="ECO:0007669"/>
    <property type="project" value="UniProtKB-KW"/>
</dbReference>
<dbReference type="GO" id="GO:0003735">
    <property type="term" value="F:structural constituent of ribosome"/>
    <property type="evidence" value="ECO:0007669"/>
    <property type="project" value="InterPro"/>
</dbReference>
<dbReference type="GO" id="GO:0006412">
    <property type="term" value="P:translation"/>
    <property type="evidence" value="ECO:0007669"/>
    <property type="project" value="UniProtKB-UniRule"/>
</dbReference>
<dbReference type="HAMAP" id="MF_00251">
    <property type="entry name" value="Ribosomal_bL36"/>
    <property type="match status" value="1"/>
</dbReference>
<dbReference type="InterPro" id="IPR000473">
    <property type="entry name" value="Ribosomal_bL36"/>
</dbReference>
<dbReference type="InterPro" id="IPR035977">
    <property type="entry name" value="Ribosomal_bL36_sp"/>
</dbReference>
<dbReference type="NCBIfam" id="TIGR01022">
    <property type="entry name" value="rpmJ_bact"/>
    <property type="match status" value="1"/>
</dbReference>
<dbReference type="PANTHER" id="PTHR42888">
    <property type="entry name" value="50S RIBOSOMAL PROTEIN L36, CHLOROPLASTIC"/>
    <property type="match status" value="1"/>
</dbReference>
<dbReference type="PANTHER" id="PTHR42888:SF1">
    <property type="entry name" value="LARGE RIBOSOMAL SUBUNIT PROTEIN BL36C"/>
    <property type="match status" value="1"/>
</dbReference>
<dbReference type="Pfam" id="PF00444">
    <property type="entry name" value="Ribosomal_L36"/>
    <property type="match status" value="1"/>
</dbReference>
<dbReference type="SUPFAM" id="SSF57840">
    <property type="entry name" value="Ribosomal protein L36"/>
    <property type="match status" value="1"/>
</dbReference>
<dbReference type="PROSITE" id="PS00828">
    <property type="entry name" value="RIBOSOMAL_L36"/>
    <property type="match status" value="1"/>
</dbReference>
<reference key="1">
    <citation type="journal article" date="2003" name="Lancet">
        <title>Genome sequence of Vibrio parahaemolyticus: a pathogenic mechanism distinct from that of V. cholerae.</title>
        <authorList>
            <person name="Makino K."/>
            <person name="Oshima K."/>
            <person name="Kurokawa K."/>
            <person name="Yokoyama K."/>
            <person name="Uda T."/>
            <person name="Tagomori K."/>
            <person name="Iijima Y."/>
            <person name="Najima M."/>
            <person name="Nakano M."/>
            <person name="Yamashita A."/>
            <person name="Kubota Y."/>
            <person name="Kimura S."/>
            <person name="Yasunaga T."/>
            <person name="Honda T."/>
            <person name="Shinagawa H."/>
            <person name="Hattori M."/>
            <person name="Iida T."/>
        </authorList>
    </citation>
    <scope>NUCLEOTIDE SEQUENCE [LARGE SCALE GENOMIC DNA]</scope>
    <source>
        <strain>RIMD 2210633</strain>
    </source>
</reference>
<sequence>MKVRASVKKICRNCKVIKRNGVVRVICSEPKHKQRQG</sequence>
<organism>
    <name type="scientific">Vibrio parahaemolyticus serotype O3:K6 (strain RIMD 2210633)</name>
    <dbReference type="NCBI Taxonomy" id="223926"/>
    <lineage>
        <taxon>Bacteria</taxon>
        <taxon>Pseudomonadati</taxon>
        <taxon>Pseudomonadota</taxon>
        <taxon>Gammaproteobacteria</taxon>
        <taxon>Vibrionales</taxon>
        <taxon>Vibrionaceae</taxon>
        <taxon>Vibrio</taxon>
    </lineage>
</organism>
<comment type="similarity">
    <text evidence="1">Belongs to the bacterial ribosomal protein bL36 family.</text>
</comment>
<gene>
    <name type="primary">rpmJ</name>
    <name type="ordered locus">VP0278</name>
</gene>